<feature type="chain" id="PRO_1000120581" description="Small ribosomal subunit protein bS21">
    <location>
        <begin position="1"/>
        <end position="64"/>
    </location>
</feature>
<accession>B3EUG8</accession>
<keyword id="KW-1185">Reference proteome</keyword>
<keyword id="KW-0687">Ribonucleoprotein</keyword>
<keyword id="KW-0689">Ribosomal protein</keyword>
<name>RS21_AMOA5</name>
<dbReference type="EMBL" id="CP001102">
    <property type="protein sequence ID" value="ACE05587.1"/>
    <property type="molecule type" value="Genomic_DNA"/>
</dbReference>
<dbReference type="RefSeq" id="WP_012472357.1">
    <property type="nucleotide sequence ID" value="NC_010830.1"/>
</dbReference>
<dbReference type="SMR" id="B3EUG8"/>
<dbReference type="STRING" id="452471.Aasi_0141"/>
<dbReference type="KEGG" id="aas:Aasi_0141"/>
<dbReference type="eggNOG" id="COG0828">
    <property type="taxonomic scope" value="Bacteria"/>
</dbReference>
<dbReference type="HOGENOM" id="CLU_159258_2_1_10"/>
<dbReference type="OrthoDB" id="598353at2"/>
<dbReference type="Proteomes" id="UP000001227">
    <property type="component" value="Chromosome"/>
</dbReference>
<dbReference type="GO" id="GO:1990904">
    <property type="term" value="C:ribonucleoprotein complex"/>
    <property type="evidence" value="ECO:0007669"/>
    <property type="project" value="UniProtKB-KW"/>
</dbReference>
<dbReference type="GO" id="GO:0005840">
    <property type="term" value="C:ribosome"/>
    <property type="evidence" value="ECO:0007669"/>
    <property type="project" value="UniProtKB-KW"/>
</dbReference>
<dbReference type="GO" id="GO:0003735">
    <property type="term" value="F:structural constituent of ribosome"/>
    <property type="evidence" value="ECO:0007669"/>
    <property type="project" value="InterPro"/>
</dbReference>
<dbReference type="GO" id="GO:0006412">
    <property type="term" value="P:translation"/>
    <property type="evidence" value="ECO:0007669"/>
    <property type="project" value="UniProtKB-UniRule"/>
</dbReference>
<dbReference type="Gene3D" id="1.20.5.1150">
    <property type="entry name" value="Ribosomal protein S8"/>
    <property type="match status" value="1"/>
</dbReference>
<dbReference type="HAMAP" id="MF_00358">
    <property type="entry name" value="Ribosomal_bS21"/>
    <property type="match status" value="1"/>
</dbReference>
<dbReference type="InterPro" id="IPR001911">
    <property type="entry name" value="Ribosomal_bS21"/>
</dbReference>
<dbReference type="InterPro" id="IPR018278">
    <property type="entry name" value="Ribosomal_bS21_CS"/>
</dbReference>
<dbReference type="InterPro" id="IPR038380">
    <property type="entry name" value="Ribosomal_bS21_sf"/>
</dbReference>
<dbReference type="NCBIfam" id="TIGR00030">
    <property type="entry name" value="S21p"/>
    <property type="match status" value="1"/>
</dbReference>
<dbReference type="Pfam" id="PF01165">
    <property type="entry name" value="Ribosomal_S21"/>
    <property type="match status" value="1"/>
</dbReference>
<dbReference type="PRINTS" id="PR00976">
    <property type="entry name" value="RIBOSOMALS21"/>
</dbReference>
<dbReference type="PROSITE" id="PS01181">
    <property type="entry name" value="RIBOSOMAL_S21"/>
    <property type="match status" value="1"/>
</dbReference>
<organism>
    <name type="scientific">Amoebophilus asiaticus (strain 5a2)</name>
    <dbReference type="NCBI Taxonomy" id="452471"/>
    <lineage>
        <taxon>Bacteria</taxon>
        <taxon>Pseudomonadati</taxon>
        <taxon>Bacteroidota</taxon>
        <taxon>Cytophagia</taxon>
        <taxon>Cytophagales</taxon>
        <taxon>Amoebophilaceae</taxon>
        <taxon>Candidatus Amoebophilus</taxon>
    </lineage>
</organism>
<proteinExistence type="inferred from homology"/>
<comment type="similarity">
    <text evidence="1">Belongs to the bacterial ribosomal protein bS21 family.</text>
</comment>
<gene>
    <name evidence="1" type="primary">rpsU</name>
    <name type="ordered locus">Aasi_0141</name>
</gene>
<sequence length="64" mass="7780">MIVVQVKDNEPIERALKRFKKKIDRVKVLKEVKSRRYYTKPSIKRREEKLKAIYKQHLQQQANG</sequence>
<reference key="1">
    <citation type="journal article" date="2010" name="J. Bacteriol.">
        <title>The genome of the amoeba symbiont 'Candidatus Amoebophilus asiaticus' reveals common mechanisms for host cell interaction among amoeba-associated bacteria.</title>
        <authorList>
            <person name="Schmitz-Esser S."/>
            <person name="Tischler P."/>
            <person name="Arnold R."/>
            <person name="Montanaro J."/>
            <person name="Wagner M."/>
            <person name="Rattei T."/>
            <person name="Horn M."/>
        </authorList>
    </citation>
    <scope>NUCLEOTIDE SEQUENCE [LARGE SCALE GENOMIC DNA]</scope>
    <source>
        <strain>5a2</strain>
    </source>
</reference>
<evidence type="ECO:0000255" key="1">
    <source>
        <dbReference type="HAMAP-Rule" id="MF_00358"/>
    </source>
</evidence>
<evidence type="ECO:0000305" key="2"/>
<protein>
    <recommendedName>
        <fullName evidence="1">Small ribosomal subunit protein bS21</fullName>
    </recommendedName>
    <alternativeName>
        <fullName evidence="2">30S ribosomal protein S21</fullName>
    </alternativeName>
</protein>